<proteinExistence type="evidence at protein level"/>
<comment type="function">
    <text evidence="2 5 6 7 8">Suppressor of microRNA (miRNA) biogenesis, including that of let-7 and possibly of miR107, miR-143 and miR-200c. Binds primary let-7 transcripts (pri-let-7), including pri-let-7g and pri-let-7a-1, and sequester them in the nucleolus, away from the microprocessor complex, hence preventing their processing into mature miRNA (PubMed:22118463). Does not act on pri-miR21 (PubMed:22118463). The repression of let-7 expression is required for normal development and contributes to maintain the pluripotent state of embryonic stem cells by preventing let-7-mediated differentiation. When overexpressed, recruits ZCCHC11/TUT4 uridylyltransferase to pre-let-7 transcripts, leading to their terminal uridylation and degradation (PubMed:19703396). This activity might not be relevant in vivo, as LIN28B-mediated inhibition of let-7 miRNA maturation appears to be ZCCHC11-independent (PubMed:22118463). Interaction with target pre-miRNAs occurs via an 5'-GGAG-3' motif in the pre-miRNA terminal loop. Mediates MYC-induced let-7 repression (By similarity). When overexpressed, isoform 1 stimulates growth of the breast adenocarcinoma cell line MCF-7. Isoform 2 has no effect on cell growth.</text>
</comment>
<comment type="subcellular location">
    <subcellularLocation>
        <location>Nucleus</location>
    </subcellularLocation>
    <subcellularLocation>
        <location evidence="8">Nucleus</location>
        <location evidence="8">Nucleolus</location>
    </subcellularLocation>
    <subcellularLocation>
        <location evidence="5">Cytoplasm</location>
    </subcellularLocation>
    <text evidence="5 8">Predominantly nucleolar (PubMed:22118463). In Huh7 cells, predominantly cytoplasmic, with only a subset of cells exhibiting strong nuclear staining; however, the specificity of the polyclonal antibody used in these experiments has not been not documented (PubMed:16971064).</text>
</comment>
<comment type="alternative products">
    <event type="alternative splicing"/>
    <isoform>
        <id>Q6ZN17-1</id>
        <name>1</name>
        <sequence type="displayed"/>
    </isoform>
    <isoform>
        <id>Q6ZN17-2</id>
        <name>2</name>
        <name>LIN28BS</name>
        <sequence type="described" ref="VSP_027207"/>
    </isoform>
</comment>
<comment type="tissue specificity">
    <text evidence="5 8">Expressed at high levels in the placenta and, at mucher lower, in testis and fetal liver (PubMed:16971064). Isoform 1 is only detected in placenta and in moderately and poorly differentiated hepatocellular carcinoma cells (at protein level). Isoform 2 is detected in fetal liver, non-tumor liver tissues, as well as well-differentiated tumor tissues (at protein level). Tends to be up-regulated in triple-negative (ER-,PR-,HER2-) breast tumors, as well as in liver, ovarian, and thyroid carcinomas (PubMed:22118463).</text>
</comment>
<comment type="induction">
    <text evidence="5">Might be negatively regulated by the microRNA let-7b.</text>
</comment>
<comment type="domain">
    <text>The tandem zinc fingers, also referred as zinc knuckle domain (ZKD), mediate specific binding to the GGAG/GGUG motif while the CSD shows only limited pyrimidine-rich sequence specificity. Both domains bind single-stranded nucleic acids.</text>
</comment>
<comment type="similarity">
    <text evidence="9">Belongs to the lin-28 family.</text>
</comment>
<comment type="online information" name="Atlas of Genetics and Cytogenetics in Oncology and Haematology">
    <link uri="https://atlasgeneticsoncology.org/gene/45723/LIN28B"/>
</comment>
<organism>
    <name type="scientific">Homo sapiens</name>
    <name type="common">Human</name>
    <dbReference type="NCBI Taxonomy" id="9606"/>
    <lineage>
        <taxon>Eukaryota</taxon>
        <taxon>Metazoa</taxon>
        <taxon>Chordata</taxon>
        <taxon>Craniata</taxon>
        <taxon>Vertebrata</taxon>
        <taxon>Euteleostomi</taxon>
        <taxon>Mammalia</taxon>
        <taxon>Eutheria</taxon>
        <taxon>Euarchontoglires</taxon>
        <taxon>Primates</taxon>
        <taxon>Haplorrhini</taxon>
        <taxon>Catarrhini</taxon>
        <taxon>Hominidae</taxon>
        <taxon>Homo</taxon>
    </lineage>
</organism>
<evidence type="ECO:0000250" key="1"/>
<evidence type="ECO:0000250" key="2">
    <source>
        <dbReference type="UniProtKB" id="Q45KJ6"/>
    </source>
</evidence>
<evidence type="ECO:0000255" key="3">
    <source>
        <dbReference type="PROSITE-ProRule" id="PRU00047"/>
    </source>
</evidence>
<evidence type="ECO:0000256" key="4">
    <source>
        <dbReference type="SAM" id="MobiDB-lite"/>
    </source>
</evidence>
<evidence type="ECO:0000269" key="5">
    <source>
    </source>
</evidence>
<evidence type="ECO:0000269" key="6">
    <source>
    </source>
</evidence>
<evidence type="ECO:0000269" key="7">
    <source>
    </source>
</evidence>
<evidence type="ECO:0000269" key="8">
    <source>
    </source>
</evidence>
<evidence type="ECO:0000305" key="9"/>
<evidence type="ECO:0007744" key="10">
    <source>
    </source>
</evidence>
<evidence type="ECO:0007829" key="11">
    <source>
        <dbReference type="PDB" id="4A4I"/>
    </source>
</evidence>
<accession>Q6ZN17</accession>
<accession>A1L165</accession>
<accession>B2RPN6</accession>
<accession>Q5TCM4</accession>
<dbReference type="EMBL" id="DQ127228">
    <property type="protein sequence ID" value="AAZ38897.1"/>
    <property type="molecule type" value="mRNA"/>
</dbReference>
<dbReference type="EMBL" id="AK131411">
    <property type="protein sequence ID" value="BAD18558.1"/>
    <property type="molecule type" value="mRNA"/>
</dbReference>
<dbReference type="EMBL" id="AL135911">
    <property type="status" value="NOT_ANNOTATED_CDS"/>
    <property type="molecule type" value="Genomic_DNA"/>
</dbReference>
<dbReference type="EMBL" id="Z95329">
    <property type="status" value="NOT_ANNOTATED_CDS"/>
    <property type="molecule type" value="Genomic_DNA"/>
</dbReference>
<dbReference type="EMBL" id="CH471051">
    <property type="protein sequence ID" value="EAW48434.1"/>
    <property type="molecule type" value="Genomic_DNA"/>
</dbReference>
<dbReference type="EMBL" id="BC127712">
    <property type="protein sequence ID" value="AAI27713.1"/>
    <property type="molecule type" value="mRNA"/>
</dbReference>
<dbReference type="EMBL" id="BC127713">
    <property type="protein sequence ID" value="AAI27714.1"/>
    <property type="molecule type" value="mRNA"/>
</dbReference>
<dbReference type="EMBL" id="BC137526">
    <property type="protein sequence ID" value="AAI37527.1"/>
    <property type="molecule type" value="mRNA"/>
</dbReference>
<dbReference type="EMBL" id="BC137527">
    <property type="protein sequence ID" value="AAI37528.1"/>
    <property type="molecule type" value="mRNA"/>
</dbReference>
<dbReference type="EMBL" id="BC141960">
    <property type="protein sequence ID" value="AAI41961.1"/>
    <property type="molecule type" value="mRNA"/>
</dbReference>
<dbReference type="CCDS" id="CCDS34504.1">
    <molecule id="Q6ZN17-1"/>
</dbReference>
<dbReference type="RefSeq" id="NP_001004317.1">
    <molecule id="Q6ZN17-1"/>
    <property type="nucleotide sequence ID" value="NM_001004317.4"/>
</dbReference>
<dbReference type="PDB" id="4A4I">
    <property type="method" value="X-ray"/>
    <property type="resolution" value="1.95 A"/>
    <property type="chains" value="A/B=24-111"/>
</dbReference>
<dbReference type="PDBsum" id="4A4I"/>
<dbReference type="SMR" id="Q6ZN17"/>
<dbReference type="BioGRID" id="133142">
    <property type="interactions" value="360"/>
</dbReference>
<dbReference type="FunCoup" id="Q6ZN17">
    <property type="interactions" value="1779"/>
</dbReference>
<dbReference type="IntAct" id="Q6ZN17">
    <property type="interactions" value="792"/>
</dbReference>
<dbReference type="MINT" id="Q6ZN17"/>
<dbReference type="STRING" id="9606.ENSP00000344401"/>
<dbReference type="ChEMBL" id="CHEMBL4295873"/>
<dbReference type="GlyGen" id="Q6ZN17">
    <property type="glycosylation" value="1 site, 1 O-linked glycan (1 site)"/>
</dbReference>
<dbReference type="iPTMnet" id="Q6ZN17"/>
<dbReference type="PhosphoSitePlus" id="Q6ZN17"/>
<dbReference type="BioMuta" id="LIN28B"/>
<dbReference type="DMDM" id="74758701"/>
<dbReference type="jPOST" id="Q6ZN17"/>
<dbReference type="MassIVE" id="Q6ZN17"/>
<dbReference type="PaxDb" id="9606-ENSP00000344401"/>
<dbReference type="PeptideAtlas" id="Q6ZN17"/>
<dbReference type="ProteomicsDB" id="67959">
    <molecule id="Q6ZN17-1"/>
</dbReference>
<dbReference type="ProteomicsDB" id="67960">
    <molecule id="Q6ZN17-2"/>
</dbReference>
<dbReference type="Pumba" id="Q6ZN17"/>
<dbReference type="Antibodypedia" id="32105">
    <property type="antibodies" value="310 antibodies from 36 providers"/>
</dbReference>
<dbReference type="DNASU" id="389421"/>
<dbReference type="Ensembl" id="ENST00000345080.5">
    <molecule id="Q6ZN17-1"/>
    <property type="protein sequence ID" value="ENSP00000344401.4"/>
    <property type="gene ID" value="ENSG00000187772.8"/>
</dbReference>
<dbReference type="GeneID" id="389421"/>
<dbReference type="KEGG" id="hsa:389421"/>
<dbReference type="MANE-Select" id="ENST00000345080.5">
    <property type="protein sequence ID" value="ENSP00000344401.4"/>
    <property type="RefSeq nucleotide sequence ID" value="NM_001004317.4"/>
    <property type="RefSeq protein sequence ID" value="NP_001004317.1"/>
</dbReference>
<dbReference type="UCSC" id="uc003pqv.2">
    <molecule id="Q6ZN17-1"/>
    <property type="organism name" value="human"/>
</dbReference>
<dbReference type="AGR" id="HGNC:32207"/>
<dbReference type="CTD" id="389421"/>
<dbReference type="DisGeNET" id="389421"/>
<dbReference type="GeneCards" id="LIN28B"/>
<dbReference type="HGNC" id="HGNC:32207">
    <property type="gene designation" value="LIN28B"/>
</dbReference>
<dbReference type="HPA" id="ENSG00000187772">
    <property type="expression patterns" value="Tissue enriched (placenta)"/>
</dbReference>
<dbReference type="MalaCards" id="LIN28B"/>
<dbReference type="MIM" id="611044">
    <property type="type" value="gene"/>
</dbReference>
<dbReference type="neXtProt" id="NX_Q6ZN17"/>
<dbReference type="OpenTargets" id="ENSG00000187772"/>
<dbReference type="Orphanet" id="635">
    <property type="disease" value="Neuroblastoma"/>
</dbReference>
<dbReference type="PharmGKB" id="PA142671543"/>
<dbReference type="VEuPathDB" id="HostDB:ENSG00000187772"/>
<dbReference type="eggNOG" id="KOG3070">
    <property type="taxonomic scope" value="Eukaryota"/>
</dbReference>
<dbReference type="GeneTree" id="ENSGT00940000153295"/>
<dbReference type="HOGENOM" id="CLU_089169_1_1_1"/>
<dbReference type="InParanoid" id="Q6ZN17"/>
<dbReference type="OMA" id="WGNMAEG"/>
<dbReference type="OrthoDB" id="422005at2759"/>
<dbReference type="PAN-GO" id="Q6ZN17">
    <property type="GO annotations" value="4 GO annotations based on evolutionary models"/>
</dbReference>
<dbReference type="PhylomeDB" id="Q6ZN17"/>
<dbReference type="TreeFam" id="TF316240"/>
<dbReference type="PathwayCommons" id="Q6ZN17"/>
<dbReference type="SignaLink" id="Q6ZN17"/>
<dbReference type="SIGNOR" id="Q6ZN17"/>
<dbReference type="BioGRID-ORCS" id="389421">
    <property type="hits" value="55 hits in 1180 CRISPR screens"/>
</dbReference>
<dbReference type="CD-CODE" id="232F8A39">
    <property type="entry name" value="P-body"/>
</dbReference>
<dbReference type="CD-CODE" id="91857CE7">
    <property type="entry name" value="Nucleolus"/>
</dbReference>
<dbReference type="CD-CODE" id="DEE660B4">
    <property type="entry name" value="Stress granule"/>
</dbReference>
<dbReference type="ChiTaRS" id="LIN28B">
    <property type="organism name" value="human"/>
</dbReference>
<dbReference type="EvolutionaryTrace" id="Q6ZN17"/>
<dbReference type="GenomeRNAi" id="389421"/>
<dbReference type="Pharos" id="Q6ZN17">
    <property type="development level" value="Tbio"/>
</dbReference>
<dbReference type="PRO" id="PR:Q6ZN17"/>
<dbReference type="Proteomes" id="UP000005640">
    <property type="component" value="Chromosome 6"/>
</dbReference>
<dbReference type="RNAct" id="Q6ZN17">
    <property type="molecule type" value="protein"/>
</dbReference>
<dbReference type="Bgee" id="ENSG00000187772">
    <property type="expression patterns" value="Expressed in placenta and 37 other cell types or tissues"/>
</dbReference>
<dbReference type="ExpressionAtlas" id="Q6ZN17">
    <property type="expression patterns" value="baseline and differential"/>
</dbReference>
<dbReference type="GO" id="GO:0005737">
    <property type="term" value="C:cytoplasm"/>
    <property type="evidence" value="ECO:0000318"/>
    <property type="project" value="GO_Central"/>
</dbReference>
<dbReference type="GO" id="GO:0005829">
    <property type="term" value="C:cytosol"/>
    <property type="evidence" value="ECO:0000314"/>
    <property type="project" value="HPA"/>
</dbReference>
<dbReference type="GO" id="GO:0005730">
    <property type="term" value="C:nucleolus"/>
    <property type="evidence" value="ECO:0000314"/>
    <property type="project" value="HPA"/>
</dbReference>
<dbReference type="GO" id="GO:0005654">
    <property type="term" value="C:nucleoplasm"/>
    <property type="evidence" value="ECO:0000314"/>
    <property type="project" value="HPA"/>
</dbReference>
<dbReference type="GO" id="GO:0005634">
    <property type="term" value="C:nucleus"/>
    <property type="evidence" value="ECO:0000318"/>
    <property type="project" value="GO_Central"/>
</dbReference>
<dbReference type="GO" id="GO:0003729">
    <property type="term" value="F:mRNA binding"/>
    <property type="evidence" value="ECO:0000318"/>
    <property type="project" value="GO_Central"/>
</dbReference>
<dbReference type="GO" id="GO:0003723">
    <property type="term" value="F:RNA binding"/>
    <property type="evidence" value="ECO:0000314"/>
    <property type="project" value="UniProtKB"/>
</dbReference>
<dbReference type="GO" id="GO:1990837">
    <property type="term" value="F:sequence-specific double-stranded DNA binding"/>
    <property type="evidence" value="ECO:0000314"/>
    <property type="project" value="ARUK-UCL"/>
</dbReference>
<dbReference type="GO" id="GO:0008270">
    <property type="term" value="F:zinc ion binding"/>
    <property type="evidence" value="ECO:0007669"/>
    <property type="project" value="UniProtKB-KW"/>
</dbReference>
<dbReference type="GO" id="GO:0010587">
    <property type="term" value="P:miRNA catabolic process"/>
    <property type="evidence" value="ECO:0000315"/>
    <property type="project" value="UniProtKB"/>
</dbReference>
<dbReference type="GO" id="GO:2000632">
    <property type="term" value="P:negative regulation of pre-miRNA processing"/>
    <property type="evidence" value="ECO:0000314"/>
    <property type="project" value="CACAO"/>
</dbReference>
<dbReference type="GO" id="GO:2000635">
    <property type="term" value="P:negative regulation of primary miRNA processing"/>
    <property type="evidence" value="ECO:0000314"/>
    <property type="project" value="CACAO"/>
</dbReference>
<dbReference type="GO" id="GO:2000627">
    <property type="term" value="P:positive regulation of miRNA catabolic process"/>
    <property type="evidence" value="ECO:0000315"/>
    <property type="project" value="CACAO"/>
</dbReference>
<dbReference type="GO" id="GO:0031054">
    <property type="term" value="P:pre-miRNA processing"/>
    <property type="evidence" value="ECO:0000315"/>
    <property type="project" value="UniProtKB"/>
</dbReference>
<dbReference type="GO" id="GO:0031123">
    <property type="term" value="P:RNA 3'-end processing"/>
    <property type="evidence" value="ECO:0000315"/>
    <property type="project" value="UniProtKB"/>
</dbReference>
<dbReference type="GO" id="GO:0050779">
    <property type="term" value="P:RNA destabilization"/>
    <property type="evidence" value="ECO:0000314"/>
    <property type="project" value="CACAO"/>
</dbReference>
<dbReference type="CDD" id="cd04458">
    <property type="entry name" value="CSP_CDS"/>
    <property type="match status" value="1"/>
</dbReference>
<dbReference type="FunFam" id="4.10.60.10:FF:000007">
    <property type="entry name" value="Protein lin-28 homolog A"/>
    <property type="match status" value="1"/>
</dbReference>
<dbReference type="FunFam" id="2.40.50.140:FF:000087">
    <property type="entry name" value="Protein lin-28 homolog B"/>
    <property type="match status" value="1"/>
</dbReference>
<dbReference type="Gene3D" id="2.40.50.140">
    <property type="entry name" value="Nucleic acid-binding proteins"/>
    <property type="match status" value="1"/>
</dbReference>
<dbReference type="Gene3D" id="4.10.60.10">
    <property type="entry name" value="Zinc finger, CCHC-type"/>
    <property type="match status" value="1"/>
</dbReference>
<dbReference type="InterPro" id="IPR011129">
    <property type="entry name" value="CSD"/>
</dbReference>
<dbReference type="InterPro" id="IPR002059">
    <property type="entry name" value="CSP_DNA-bd"/>
</dbReference>
<dbReference type="InterPro" id="IPR051373">
    <property type="entry name" value="Lin-28_RNA-binding"/>
</dbReference>
<dbReference type="InterPro" id="IPR054081">
    <property type="entry name" value="Lin-28A-like_Znf-CCHC_2"/>
</dbReference>
<dbReference type="InterPro" id="IPR012340">
    <property type="entry name" value="NA-bd_OB-fold"/>
</dbReference>
<dbReference type="InterPro" id="IPR001878">
    <property type="entry name" value="Znf_CCHC"/>
</dbReference>
<dbReference type="InterPro" id="IPR036875">
    <property type="entry name" value="Znf_CCHC_sf"/>
</dbReference>
<dbReference type="PANTHER" id="PTHR46109">
    <property type="entry name" value="PROTEIN LIN-28"/>
    <property type="match status" value="1"/>
</dbReference>
<dbReference type="PANTHER" id="PTHR46109:SF3">
    <property type="entry name" value="PROTEIN LIN-28 HOMOLOG B"/>
    <property type="match status" value="1"/>
</dbReference>
<dbReference type="Pfam" id="PF00313">
    <property type="entry name" value="CSD"/>
    <property type="match status" value="1"/>
</dbReference>
<dbReference type="Pfam" id="PF21890">
    <property type="entry name" value="Lin-28A-like_zf-CCHC_2"/>
    <property type="match status" value="1"/>
</dbReference>
<dbReference type="Pfam" id="PF00098">
    <property type="entry name" value="zf-CCHC"/>
    <property type="match status" value="1"/>
</dbReference>
<dbReference type="PRINTS" id="PR00050">
    <property type="entry name" value="COLDSHOCK"/>
</dbReference>
<dbReference type="SMART" id="SM00357">
    <property type="entry name" value="CSP"/>
    <property type="match status" value="1"/>
</dbReference>
<dbReference type="SMART" id="SM00343">
    <property type="entry name" value="ZnF_C2HC"/>
    <property type="match status" value="2"/>
</dbReference>
<dbReference type="SUPFAM" id="SSF50249">
    <property type="entry name" value="Nucleic acid-binding proteins"/>
    <property type="match status" value="1"/>
</dbReference>
<dbReference type="SUPFAM" id="SSF57756">
    <property type="entry name" value="Retrovirus zinc finger-like domains"/>
    <property type="match status" value="1"/>
</dbReference>
<dbReference type="PROSITE" id="PS51857">
    <property type="entry name" value="CSD_2"/>
    <property type="match status" value="1"/>
</dbReference>
<dbReference type="PROSITE" id="PS50158">
    <property type="entry name" value="ZF_CCHC"/>
    <property type="match status" value="1"/>
</dbReference>
<gene>
    <name type="primary">LIN28B</name>
    <name type="synonym">CSDD2</name>
</gene>
<name>LN28B_HUMAN</name>
<keyword id="KW-0002">3D-structure</keyword>
<keyword id="KW-0025">Alternative splicing</keyword>
<keyword id="KW-0963">Cytoplasm</keyword>
<keyword id="KW-0479">Metal-binding</keyword>
<keyword id="KW-0539">Nucleus</keyword>
<keyword id="KW-0597">Phosphoprotein</keyword>
<keyword id="KW-1267">Proteomics identification</keyword>
<keyword id="KW-1185">Reference proteome</keyword>
<keyword id="KW-0677">Repeat</keyword>
<keyword id="KW-0694">RNA-binding</keyword>
<keyword id="KW-0943">RNA-mediated gene silencing</keyword>
<keyword id="KW-0862">Zinc</keyword>
<keyword id="KW-0863">Zinc-finger</keyword>
<reference key="1">
    <citation type="submission" date="2005-07" db="EMBL/GenBank/DDBJ databases">
        <title>Expression of Lin28A and Lin28B in post-implantation mouse embryos.</title>
        <authorList>
            <person name="Moss E.G."/>
            <person name="Kemper K."/>
        </authorList>
    </citation>
    <scope>NUCLEOTIDE SEQUENCE [MRNA] (ISOFORM 1)</scope>
</reference>
<reference key="2">
    <citation type="journal article" date="2004" name="Nat. Genet.">
        <title>Complete sequencing and characterization of 21,243 full-length human cDNAs.</title>
        <authorList>
            <person name="Ota T."/>
            <person name="Suzuki Y."/>
            <person name="Nishikawa T."/>
            <person name="Otsuki T."/>
            <person name="Sugiyama T."/>
            <person name="Irie R."/>
            <person name="Wakamatsu A."/>
            <person name="Hayashi K."/>
            <person name="Sato H."/>
            <person name="Nagai K."/>
            <person name="Kimura K."/>
            <person name="Makita H."/>
            <person name="Sekine M."/>
            <person name="Obayashi M."/>
            <person name="Nishi T."/>
            <person name="Shibahara T."/>
            <person name="Tanaka T."/>
            <person name="Ishii S."/>
            <person name="Yamamoto J."/>
            <person name="Saito K."/>
            <person name="Kawai Y."/>
            <person name="Isono Y."/>
            <person name="Nakamura Y."/>
            <person name="Nagahari K."/>
            <person name="Murakami K."/>
            <person name="Yasuda T."/>
            <person name="Iwayanagi T."/>
            <person name="Wagatsuma M."/>
            <person name="Shiratori A."/>
            <person name="Sudo H."/>
            <person name="Hosoiri T."/>
            <person name="Kaku Y."/>
            <person name="Kodaira H."/>
            <person name="Kondo H."/>
            <person name="Sugawara M."/>
            <person name="Takahashi M."/>
            <person name="Kanda K."/>
            <person name="Yokoi T."/>
            <person name="Furuya T."/>
            <person name="Kikkawa E."/>
            <person name="Omura Y."/>
            <person name="Abe K."/>
            <person name="Kamihara K."/>
            <person name="Katsuta N."/>
            <person name="Sato K."/>
            <person name="Tanikawa M."/>
            <person name="Yamazaki M."/>
            <person name="Ninomiya K."/>
            <person name="Ishibashi T."/>
            <person name="Yamashita H."/>
            <person name="Murakawa K."/>
            <person name="Fujimori K."/>
            <person name="Tanai H."/>
            <person name="Kimata M."/>
            <person name="Watanabe M."/>
            <person name="Hiraoka S."/>
            <person name="Chiba Y."/>
            <person name="Ishida S."/>
            <person name="Ono Y."/>
            <person name="Takiguchi S."/>
            <person name="Watanabe S."/>
            <person name="Yosida M."/>
            <person name="Hotuta T."/>
            <person name="Kusano J."/>
            <person name="Kanehori K."/>
            <person name="Takahashi-Fujii A."/>
            <person name="Hara H."/>
            <person name="Tanase T.-O."/>
            <person name="Nomura Y."/>
            <person name="Togiya S."/>
            <person name="Komai F."/>
            <person name="Hara R."/>
            <person name="Takeuchi K."/>
            <person name="Arita M."/>
            <person name="Imose N."/>
            <person name="Musashino K."/>
            <person name="Yuuki H."/>
            <person name="Oshima A."/>
            <person name="Sasaki N."/>
            <person name="Aotsuka S."/>
            <person name="Yoshikawa Y."/>
            <person name="Matsunawa H."/>
            <person name="Ichihara T."/>
            <person name="Shiohata N."/>
            <person name="Sano S."/>
            <person name="Moriya S."/>
            <person name="Momiyama H."/>
            <person name="Satoh N."/>
            <person name="Takami S."/>
            <person name="Terashima Y."/>
            <person name="Suzuki O."/>
            <person name="Nakagawa S."/>
            <person name="Senoh A."/>
            <person name="Mizoguchi H."/>
            <person name="Goto Y."/>
            <person name="Shimizu F."/>
            <person name="Wakebe H."/>
            <person name="Hishigaki H."/>
            <person name="Watanabe T."/>
            <person name="Sugiyama A."/>
            <person name="Takemoto M."/>
            <person name="Kawakami B."/>
            <person name="Yamazaki M."/>
            <person name="Watanabe K."/>
            <person name="Kumagai A."/>
            <person name="Itakura S."/>
            <person name="Fukuzumi Y."/>
            <person name="Fujimori Y."/>
            <person name="Komiyama M."/>
            <person name="Tashiro H."/>
            <person name="Tanigami A."/>
            <person name="Fujiwara T."/>
            <person name="Ono T."/>
            <person name="Yamada K."/>
            <person name="Fujii Y."/>
            <person name="Ozaki K."/>
            <person name="Hirao M."/>
            <person name="Ohmori Y."/>
            <person name="Kawabata A."/>
            <person name="Hikiji T."/>
            <person name="Kobatake N."/>
            <person name="Inagaki H."/>
            <person name="Ikema Y."/>
            <person name="Okamoto S."/>
            <person name="Okitani R."/>
            <person name="Kawakami T."/>
            <person name="Noguchi S."/>
            <person name="Itoh T."/>
            <person name="Shigeta K."/>
            <person name="Senba T."/>
            <person name="Matsumura K."/>
            <person name="Nakajima Y."/>
            <person name="Mizuno T."/>
            <person name="Morinaga M."/>
            <person name="Sasaki M."/>
            <person name="Togashi T."/>
            <person name="Oyama M."/>
            <person name="Hata H."/>
            <person name="Watanabe M."/>
            <person name="Komatsu T."/>
            <person name="Mizushima-Sugano J."/>
            <person name="Satoh T."/>
            <person name="Shirai Y."/>
            <person name="Takahashi Y."/>
            <person name="Nakagawa K."/>
            <person name="Okumura K."/>
            <person name="Nagase T."/>
            <person name="Nomura N."/>
            <person name="Kikuchi H."/>
            <person name="Masuho Y."/>
            <person name="Yamashita R."/>
            <person name="Nakai K."/>
            <person name="Yada T."/>
            <person name="Nakamura Y."/>
            <person name="Ohara O."/>
            <person name="Isogai T."/>
            <person name="Sugano S."/>
        </authorList>
    </citation>
    <scope>NUCLEOTIDE SEQUENCE [LARGE SCALE MRNA] (ISOFORM 1)</scope>
    <source>
        <tissue>Teratocarcinoma</tissue>
    </source>
</reference>
<reference key="3">
    <citation type="journal article" date="2003" name="Nature">
        <title>The DNA sequence and analysis of human chromosome 6.</title>
        <authorList>
            <person name="Mungall A.J."/>
            <person name="Palmer S.A."/>
            <person name="Sims S.K."/>
            <person name="Edwards C.A."/>
            <person name="Ashurst J.L."/>
            <person name="Wilming L."/>
            <person name="Jones M.C."/>
            <person name="Horton R."/>
            <person name="Hunt S.E."/>
            <person name="Scott C.E."/>
            <person name="Gilbert J.G.R."/>
            <person name="Clamp M.E."/>
            <person name="Bethel G."/>
            <person name="Milne S."/>
            <person name="Ainscough R."/>
            <person name="Almeida J.P."/>
            <person name="Ambrose K.D."/>
            <person name="Andrews T.D."/>
            <person name="Ashwell R.I.S."/>
            <person name="Babbage A.K."/>
            <person name="Bagguley C.L."/>
            <person name="Bailey J."/>
            <person name="Banerjee R."/>
            <person name="Barker D.J."/>
            <person name="Barlow K.F."/>
            <person name="Bates K."/>
            <person name="Beare D.M."/>
            <person name="Beasley H."/>
            <person name="Beasley O."/>
            <person name="Bird C.P."/>
            <person name="Blakey S.E."/>
            <person name="Bray-Allen S."/>
            <person name="Brook J."/>
            <person name="Brown A.J."/>
            <person name="Brown J.Y."/>
            <person name="Burford D.C."/>
            <person name="Burrill W."/>
            <person name="Burton J."/>
            <person name="Carder C."/>
            <person name="Carter N.P."/>
            <person name="Chapman J.C."/>
            <person name="Clark S.Y."/>
            <person name="Clark G."/>
            <person name="Clee C.M."/>
            <person name="Clegg S."/>
            <person name="Cobley V."/>
            <person name="Collier R.E."/>
            <person name="Collins J.E."/>
            <person name="Colman L.K."/>
            <person name="Corby N.R."/>
            <person name="Coville G.J."/>
            <person name="Culley K.M."/>
            <person name="Dhami P."/>
            <person name="Davies J."/>
            <person name="Dunn M."/>
            <person name="Earthrowl M.E."/>
            <person name="Ellington A.E."/>
            <person name="Evans K.A."/>
            <person name="Faulkner L."/>
            <person name="Francis M.D."/>
            <person name="Frankish A."/>
            <person name="Frankland J."/>
            <person name="French L."/>
            <person name="Garner P."/>
            <person name="Garnett J."/>
            <person name="Ghori M.J."/>
            <person name="Gilby L.M."/>
            <person name="Gillson C.J."/>
            <person name="Glithero R.J."/>
            <person name="Grafham D.V."/>
            <person name="Grant M."/>
            <person name="Gribble S."/>
            <person name="Griffiths C."/>
            <person name="Griffiths M.N.D."/>
            <person name="Hall R."/>
            <person name="Halls K.S."/>
            <person name="Hammond S."/>
            <person name="Harley J.L."/>
            <person name="Hart E.A."/>
            <person name="Heath P.D."/>
            <person name="Heathcott R."/>
            <person name="Holmes S.J."/>
            <person name="Howden P.J."/>
            <person name="Howe K.L."/>
            <person name="Howell G.R."/>
            <person name="Huckle E."/>
            <person name="Humphray S.J."/>
            <person name="Humphries M.D."/>
            <person name="Hunt A.R."/>
            <person name="Johnson C.M."/>
            <person name="Joy A.A."/>
            <person name="Kay M."/>
            <person name="Keenan S.J."/>
            <person name="Kimberley A.M."/>
            <person name="King A."/>
            <person name="Laird G.K."/>
            <person name="Langford C."/>
            <person name="Lawlor S."/>
            <person name="Leongamornlert D.A."/>
            <person name="Leversha M."/>
            <person name="Lloyd C.R."/>
            <person name="Lloyd D.M."/>
            <person name="Loveland J.E."/>
            <person name="Lovell J."/>
            <person name="Martin S."/>
            <person name="Mashreghi-Mohammadi M."/>
            <person name="Maslen G.L."/>
            <person name="Matthews L."/>
            <person name="McCann O.T."/>
            <person name="McLaren S.J."/>
            <person name="McLay K."/>
            <person name="McMurray A."/>
            <person name="Moore M.J.F."/>
            <person name="Mullikin J.C."/>
            <person name="Niblett D."/>
            <person name="Nickerson T."/>
            <person name="Novik K.L."/>
            <person name="Oliver K."/>
            <person name="Overton-Larty E.K."/>
            <person name="Parker A."/>
            <person name="Patel R."/>
            <person name="Pearce A.V."/>
            <person name="Peck A.I."/>
            <person name="Phillimore B.J.C.T."/>
            <person name="Phillips S."/>
            <person name="Plumb R.W."/>
            <person name="Porter K.M."/>
            <person name="Ramsey Y."/>
            <person name="Ranby S.A."/>
            <person name="Rice C.M."/>
            <person name="Ross M.T."/>
            <person name="Searle S.M."/>
            <person name="Sehra H.K."/>
            <person name="Sheridan E."/>
            <person name="Skuce C.D."/>
            <person name="Smith S."/>
            <person name="Smith M."/>
            <person name="Spraggon L."/>
            <person name="Squares S.L."/>
            <person name="Steward C.A."/>
            <person name="Sycamore N."/>
            <person name="Tamlyn-Hall G."/>
            <person name="Tester J."/>
            <person name="Theaker A.J."/>
            <person name="Thomas D.W."/>
            <person name="Thorpe A."/>
            <person name="Tracey A."/>
            <person name="Tromans A."/>
            <person name="Tubby B."/>
            <person name="Wall M."/>
            <person name="Wallis J.M."/>
            <person name="West A.P."/>
            <person name="White S.S."/>
            <person name="Whitehead S.L."/>
            <person name="Whittaker H."/>
            <person name="Wild A."/>
            <person name="Willey D.J."/>
            <person name="Wilmer T.E."/>
            <person name="Wood J.M."/>
            <person name="Wray P.W."/>
            <person name="Wyatt J.C."/>
            <person name="Young L."/>
            <person name="Younger R.M."/>
            <person name="Bentley D.R."/>
            <person name="Coulson A."/>
            <person name="Durbin R.M."/>
            <person name="Hubbard T."/>
            <person name="Sulston J.E."/>
            <person name="Dunham I."/>
            <person name="Rogers J."/>
            <person name="Beck S."/>
        </authorList>
    </citation>
    <scope>NUCLEOTIDE SEQUENCE [LARGE SCALE GENOMIC DNA]</scope>
</reference>
<reference key="4">
    <citation type="submission" date="2005-09" db="EMBL/GenBank/DDBJ databases">
        <authorList>
            <person name="Mural R.J."/>
            <person name="Istrail S."/>
            <person name="Sutton G.G."/>
            <person name="Florea L."/>
            <person name="Halpern A.L."/>
            <person name="Mobarry C.M."/>
            <person name="Lippert R."/>
            <person name="Walenz B."/>
            <person name="Shatkay H."/>
            <person name="Dew I."/>
            <person name="Miller J.R."/>
            <person name="Flanigan M.J."/>
            <person name="Edwards N.J."/>
            <person name="Bolanos R."/>
            <person name="Fasulo D."/>
            <person name="Halldorsson B.V."/>
            <person name="Hannenhalli S."/>
            <person name="Turner R."/>
            <person name="Yooseph S."/>
            <person name="Lu F."/>
            <person name="Nusskern D.R."/>
            <person name="Shue B.C."/>
            <person name="Zheng X.H."/>
            <person name="Zhong F."/>
            <person name="Delcher A.L."/>
            <person name="Huson D.H."/>
            <person name="Kravitz S.A."/>
            <person name="Mouchard L."/>
            <person name="Reinert K."/>
            <person name="Remington K.A."/>
            <person name="Clark A.G."/>
            <person name="Waterman M.S."/>
            <person name="Eichler E.E."/>
            <person name="Adams M.D."/>
            <person name="Hunkapiller M.W."/>
            <person name="Myers E.W."/>
            <person name="Venter J.C."/>
        </authorList>
    </citation>
    <scope>NUCLEOTIDE SEQUENCE [LARGE SCALE GENOMIC DNA]</scope>
</reference>
<reference key="5">
    <citation type="journal article" date="2004" name="Genome Res.">
        <title>The status, quality, and expansion of the NIH full-length cDNA project: the Mammalian Gene Collection (MGC).</title>
        <authorList>
            <consortium name="The MGC Project Team"/>
        </authorList>
    </citation>
    <scope>NUCLEOTIDE SEQUENCE [LARGE SCALE MRNA] (ISOFORM 1)</scope>
</reference>
<reference key="6">
    <citation type="journal article" date="2006" name="Gene">
        <title>Identification and characterization of lin-28 homolog B (LIN28B) in human hepatocellular carcinoma.</title>
        <authorList>
            <person name="Guo Y."/>
            <person name="Chen Y."/>
            <person name="Ito H."/>
            <person name="Watanabe A."/>
            <person name="Ge X."/>
            <person name="Kodama T."/>
            <person name="Aburatani H."/>
        </authorList>
    </citation>
    <scope>ALTERNATIVE SPLICING (ISOFORMS 1 AND 2)</scope>
    <scope>SUBCELLULAR LOCATION</scope>
    <scope>TISSUE SPECIFICITY</scope>
    <scope>INDUCTION</scope>
</reference>
<reference key="7">
    <citation type="journal article" date="2008" name="Mol. Cell">
        <title>Lin28 mediates the terminal uridylation of let-7 precursor MicroRNA.</title>
        <authorList>
            <person name="Heo I."/>
            <person name="Joo C."/>
            <person name="Cho J."/>
            <person name="Ha M."/>
            <person name="Han J."/>
            <person name="Kim V.N."/>
        </authorList>
    </citation>
    <scope>FUNCTION</scope>
    <scope>SUBCELLULAR LOCATION</scope>
    <scope>RNA-BINDING</scope>
</reference>
<reference key="8">
    <citation type="journal article" date="2009" name="Anal. Chem.">
        <title>Lys-N and trypsin cover complementary parts of the phosphoproteome in a refined SCX-based approach.</title>
        <authorList>
            <person name="Gauci S."/>
            <person name="Helbig A.O."/>
            <person name="Slijper M."/>
            <person name="Krijgsveld J."/>
            <person name="Heck A.J."/>
            <person name="Mohammed S."/>
        </authorList>
    </citation>
    <scope>IDENTIFICATION BY MASS SPECTROMETRY [LARGE SCALE ANALYSIS]</scope>
</reference>
<reference key="9">
    <citation type="journal article" date="2009" name="Cell">
        <title>TUT4 in concert with Lin28 suppresses MicroRNA biogenesis through pre-microRNA uridylation.</title>
        <authorList>
            <person name="Heo I."/>
            <person name="Joo C."/>
            <person name="Kim Y.-K."/>
            <person name="Ha M."/>
            <person name="Yoon M.-J."/>
            <person name="Cho J."/>
            <person name="Yeom K.-H."/>
            <person name="Han J."/>
            <person name="Kim V.N."/>
        </authorList>
    </citation>
    <scope>FUNCTION</scope>
    <scope>RNA-BINDING</scope>
</reference>
<reference key="10">
    <citation type="journal article" date="2009" name="Nat. Genet.">
        <title>Lin28 promotes transformation and is associated with advanced human malignancies.</title>
        <authorList>
            <person name="Viswanathan S.R."/>
            <person name="Powers J.T."/>
            <person name="Einhorn W."/>
            <person name="Hoshida Y."/>
            <person name="Ng T.L."/>
            <person name="Toffanin S."/>
            <person name="O'Sullivan M."/>
            <person name="Lu J."/>
            <person name="Phillips L.A."/>
            <person name="Lockhart V.L."/>
            <person name="Shah S.P."/>
            <person name="Tanwar P.S."/>
            <person name="Mermel C.H."/>
            <person name="Beroukhim R."/>
            <person name="Azam M."/>
            <person name="Teixeira J."/>
            <person name="Meyerson M."/>
            <person name="Hughes T.P."/>
            <person name="Llovet J.M."/>
            <person name="Radich J."/>
            <person name="Mullighan C.G."/>
            <person name="Golub T.R."/>
            <person name="Sorensen P.H."/>
            <person name="Daley G.Q."/>
        </authorList>
    </citation>
    <scope>POSSIBLE INVOLVEMENT IN CANCERS</scope>
</reference>
<reference key="11">
    <citation type="journal article" date="2011" name="BMC Syst. Biol.">
        <title>Initial characterization of the human central proteome.</title>
        <authorList>
            <person name="Burkard T.R."/>
            <person name="Planyavsky M."/>
            <person name="Kaupe I."/>
            <person name="Breitwieser F.P."/>
            <person name="Buerckstuemmer T."/>
            <person name="Bennett K.L."/>
            <person name="Superti-Furga G."/>
            <person name="Colinge J."/>
        </authorList>
    </citation>
    <scope>IDENTIFICATION BY MASS SPECTROMETRY [LARGE SCALE ANALYSIS]</scope>
</reference>
<reference key="12">
    <citation type="journal article" date="2011" name="Cell">
        <title>Lin28A and Lin28B inhibit let-7 microRNA biogenesis by distinct mechanisms.</title>
        <authorList>
            <person name="Piskounova E."/>
            <person name="Polytarchou C."/>
            <person name="Thornton J.E."/>
            <person name="LaPierre R.J."/>
            <person name="Pothoulakis C."/>
            <person name="Hagan J.P."/>
            <person name="Iliopoulos D."/>
            <person name="Gregory R.I."/>
        </authorList>
    </citation>
    <scope>FUNCTION IN PRE-LET-7 REPRESSION</scope>
    <scope>SUBCELLULAR LOCATION</scope>
    <scope>TISSUE SPECIFICITY</scope>
</reference>
<reference key="13">
    <citation type="journal article" date="2011" name="Sci. Signal.">
        <title>System-wide temporal characterization of the proteome and phosphoproteome of human embryonic stem cell differentiation.</title>
        <authorList>
            <person name="Rigbolt K.T."/>
            <person name="Prokhorova T.A."/>
            <person name="Akimov V."/>
            <person name="Henningsen J."/>
            <person name="Johansen P.T."/>
            <person name="Kratchmarova I."/>
            <person name="Kassem M."/>
            <person name="Mann M."/>
            <person name="Olsen J.V."/>
            <person name="Blagoev B."/>
        </authorList>
    </citation>
    <scope>IDENTIFICATION BY MASS SPECTROMETRY [LARGE SCALE ANALYSIS]</scope>
</reference>
<reference key="14">
    <citation type="journal article" date="2013" name="J. Proteome Res.">
        <title>Toward a comprehensive characterization of a human cancer cell phosphoproteome.</title>
        <authorList>
            <person name="Zhou H."/>
            <person name="Di Palma S."/>
            <person name="Preisinger C."/>
            <person name="Peng M."/>
            <person name="Polat A.N."/>
            <person name="Heck A.J."/>
            <person name="Mohammed S."/>
        </authorList>
    </citation>
    <scope>PHOSPHORYLATION [LARGE SCALE ANALYSIS] AT SER-54; SER-96; SER-105; SER-110 AND SER-203</scope>
    <scope>IDENTIFICATION BY MASS SPECTROMETRY [LARGE SCALE ANALYSIS]</scope>
    <source>
        <tissue>Erythroleukemia</tissue>
    </source>
</reference>
<reference key="15">
    <citation type="journal article" date="2012" name="Nucleic Acids Res.">
        <title>The Lin28 cold-shock domain remodels pre-let-7 microRNA.</title>
        <authorList>
            <person name="Mayr F."/>
            <person name="Schutz A."/>
            <person name="Doge N."/>
            <person name="Heinemann U."/>
        </authorList>
    </citation>
    <scope>X-RAY CRYSTALLOGRAPHY (1.95 ANGSTROMS) OF 24-111</scope>
    <scope>ZINC KNUCKLE DOMAIN</scope>
</reference>
<sequence length="250" mass="27084">MAEGGASKGGGEEPGKLPEPAEEESQVLRGTGHCKWFNVRMGFGFISMINREGSPLDIPVDVFVHQSKLFMEGFRSLKEGEPVEFTFKKSSKGLESIRVTGPGGSPCLGSERRPKGKTLQKRKPKGDRCYNCGGLDHHAKECSLPPQPKKCHYCQSIMHMVANCPHKNVAQPPASSQGRQEAESQPCTSTLPREVGGGHGCTSPPFPQEARAEISERSGRSPQEASSTKSSIAPEEQSKKGPSVQKRKKT</sequence>
<protein>
    <recommendedName>
        <fullName>Protein lin-28 homolog B</fullName>
        <shortName>Lin-28B</shortName>
    </recommendedName>
</protein>
<feature type="chain" id="PRO_0000253793" description="Protein lin-28 homolog B">
    <location>
        <begin position="1"/>
        <end position="250"/>
    </location>
</feature>
<feature type="domain" description="CSD">
    <location>
        <begin position="29"/>
        <end position="102"/>
    </location>
</feature>
<feature type="zinc finger region" description="CCHC-type 1" evidence="3">
    <location>
        <begin position="127"/>
        <end position="144"/>
    </location>
</feature>
<feature type="zinc finger region" description="CCHC-type 2" evidence="3">
    <location>
        <begin position="149"/>
        <end position="166"/>
    </location>
</feature>
<feature type="region of interest" description="Disordered" evidence="4">
    <location>
        <begin position="1"/>
        <end position="26"/>
    </location>
</feature>
<feature type="region of interest" description="Disordered" evidence="4">
    <location>
        <begin position="98"/>
        <end position="126"/>
    </location>
</feature>
<feature type="region of interest" description="Disordered" evidence="4">
    <location>
        <begin position="169"/>
        <end position="250"/>
    </location>
</feature>
<feature type="short sequence motif" description="Bipartite nuclear localization signal" evidence="8">
    <location>
        <begin position="112"/>
        <end position="125"/>
    </location>
</feature>
<feature type="short sequence motif" description="Nucleolar localization signal" evidence="8">
    <location>
        <begin position="239"/>
        <end position="250"/>
    </location>
</feature>
<feature type="compositionally biased region" description="Basic residues" evidence="4">
    <location>
        <begin position="114"/>
        <end position="125"/>
    </location>
</feature>
<feature type="compositionally biased region" description="Polar residues" evidence="4">
    <location>
        <begin position="173"/>
        <end position="191"/>
    </location>
</feature>
<feature type="compositionally biased region" description="Basic and acidic residues" evidence="4">
    <location>
        <begin position="210"/>
        <end position="219"/>
    </location>
</feature>
<feature type="compositionally biased region" description="Polar residues" evidence="4">
    <location>
        <begin position="220"/>
        <end position="231"/>
    </location>
</feature>
<feature type="binding site" evidence="1">
    <location>
        <position position="129"/>
    </location>
    <ligand>
        <name>Zn(2+)</name>
        <dbReference type="ChEBI" id="CHEBI:29105"/>
        <label>1</label>
    </ligand>
</feature>
<feature type="binding site" evidence="1">
    <location>
        <position position="132"/>
    </location>
    <ligand>
        <name>Zn(2+)</name>
        <dbReference type="ChEBI" id="CHEBI:29105"/>
        <label>1</label>
    </ligand>
</feature>
<feature type="binding site" evidence="1">
    <location>
        <position position="137"/>
    </location>
    <ligand>
        <name>Zn(2+)</name>
        <dbReference type="ChEBI" id="CHEBI:29105"/>
        <label>1</label>
    </ligand>
</feature>
<feature type="binding site" evidence="1">
    <location>
        <position position="142"/>
    </location>
    <ligand>
        <name>Zn(2+)</name>
        <dbReference type="ChEBI" id="CHEBI:29105"/>
        <label>1</label>
    </ligand>
</feature>
<feature type="binding site" evidence="1">
    <location>
        <position position="151"/>
    </location>
    <ligand>
        <name>Zn(2+)</name>
        <dbReference type="ChEBI" id="CHEBI:29105"/>
        <label>2</label>
    </ligand>
</feature>
<feature type="binding site" evidence="1">
    <location>
        <position position="154"/>
    </location>
    <ligand>
        <name>Zn(2+)</name>
        <dbReference type="ChEBI" id="CHEBI:29105"/>
        <label>2</label>
    </ligand>
</feature>
<feature type="binding site" evidence="1">
    <location>
        <position position="159"/>
    </location>
    <ligand>
        <name>Zn(2+)</name>
        <dbReference type="ChEBI" id="CHEBI:29105"/>
        <label>2</label>
    </ligand>
</feature>
<feature type="binding site" evidence="1">
    <location>
        <position position="164"/>
    </location>
    <ligand>
        <name>Zn(2+)</name>
        <dbReference type="ChEBI" id="CHEBI:29105"/>
        <label>2</label>
    </ligand>
</feature>
<feature type="modified residue" description="Phosphoserine" evidence="10">
    <location>
        <position position="54"/>
    </location>
</feature>
<feature type="modified residue" description="Phosphoserine" evidence="10">
    <location>
        <position position="96"/>
    </location>
</feature>
<feature type="modified residue" description="Phosphoserine" evidence="10">
    <location>
        <position position="105"/>
    </location>
</feature>
<feature type="modified residue" description="Phosphoserine" evidence="10">
    <location>
        <position position="110"/>
    </location>
</feature>
<feature type="modified residue" description="Phosphoserine" evidence="10">
    <location>
        <position position="203"/>
    </location>
</feature>
<feature type="splice variant" id="VSP_027207" description="In isoform 2." evidence="9">
    <location>
        <begin position="1"/>
        <end position="70"/>
    </location>
</feature>
<feature type="strand" evidence="11">
    <location>
        <begin position="28"/>
        <end position="38"/>
    </location>
</feature>
<feature type="turn" evidence="11">
    <location>
        <begin position="39"/>
        <end position="42"/>
    </location>
</feature>
<feature type="strand" evidence="11">
    <location>
        <begin position="43"/>
        <end position="51"/>
    </location>
</feature>
<feature type="strand" evidence="11">
    <location>
        <begin position="54"/>
        <end position="65"/>
    </location>
</feature>
<feature type="helix" evidence="11">
    <location>
        <begin position="66"/>
        <end position="68"/>
    </location>
</feature>
<feature type="strand" evidence="11">
    <location>
        <begin position="71"/>
        <end position="74"/>
    </location>
</feature>
<feature type="strand" evidence="11">
    <location>
        <begin position="82"/>
        <end position="88"/>
    </location>
</feature>
<feature type="strand" evidence="11">
    <location>
        <begin position="95"/>
        <end position="101"/>
    </location>
</feature>
<feature type="helix" evidence="11">
    <location>
        <begin position="102"/>
        <end position="104"/>
    </location>
</feature>